<accession>Q8FGS9</accession>
<reference key="1">
    <citation type="journal article" date="2002" name="Proc. Natl. Acad. Sci. U.S.A.">
        <title>Extensive mosaic structure revealed by the complete genome sequence of uropathogenic Escherichia coli.</title>
        <authorList>
            <person name="Welch R.A."/>
            <person name="Burland V."/>
            <person name="Plunkett G. III"/>
            <person name="Redford P."/>
            <person name="Roesch P."/>
            <person name="Rasko D."/>
            <person name="Buckles E.L."/>
            <person name="Liou S.-R."/>
            <person name="Boutin A."/>
            <person name="Hackett J."/>
            <person name="Stroud D."/>
            <person name="Mayhew G.F."/>
            <person name="Rose D.J."/>
            <person name="Zhou S."/>
            <person name="Schwartz D.C."/>
            <person name="Perna N.T."/>
            <person name="Mobley H.L.T."/>
            <person name="Donnenberg M.S."/>
            <person name="Blattner F.R."/>
        </authorList>
    </citation>
    <scope>NUCLEOTIDE SEQUENCE [LARGE SCALE GENOMIC DNA]</scope>
    <source>
        <strain>CFT073 / ATCC 700928 / UPEC</strain>
    </source>
</reference>
<feature type="chain" id="PRO_0000285000" description="Ribosomal RNA small subunit methyltransferase F">
    <location>
        <begin position="1"/>
        <end position="479"/>
    </location>
</feature>
<feature type="active site" description="Nucleophile" evidence="1">
    <location>
        <position position="247"/>
    </location>
</feature>
<feature type="binding site" evidence="1">
    <location>
        <begin position="125"/>
        <end position="131"/>
    </location>
    <ligand>
        <name>S-adenosyl-L-methionine</name>
        <dbReference type="ChEBI" id="CHEBI:59789"/>
    </ligand>
</feature>
<feature type="binding site" evidence="1">
    <location>
        <position position="149"/>
    </location>
    <ligand>
        <name>S-adenosyl-L-methionine</name>
        <dbReference type="ChEBI" id="CHEBI:59789"/>
    </ligand>
</feature>
<feature type="binding site" evidence="1">
    <location>
        <position position="176"/>
    </location>
    <ligand>
        <name>S-adenosyl-L-methionine</name>
        <dbReference type="ChEBI" id="CHEBI:59789"/>
    </ligand>
</feature>
<feature type="binding site" evidence="1">
    <location>
        <position position="194"/>
    </location>
    <ligand>
        <name>S-adenosyl-L-methionine</name>
        <dbReference type="ChEBI" id="CHEBI:59789"/>
    </ligand>
</feature>
<gene>
    <name evidence="1" type="primary">rsmF</name>
    <name type="ordered locus">c2244</name>
</gene>
<proteinExistence type="inferred from homology"/>
<protein>
    <recommendedName>
        <fullName evidence="1">Ribosomal RNA small subunit methyltransferase F</fullName>
        <ecNumber evidence="1">2.1.1.178</ecNumber>
    </recommendedName>
    <alternativeName>
        <fullName evidence="1">16S rRNA m5C1407 methyltransferase</fullName>
    </alternativeName>
    <alternativeName>
        <fullName evidence="1">rRNA (cytosine-C(5)-)-methyltransferase RsmF</fullName>
    </alternativeName>
</protein>
<sequence>MAQHTVYFPDAFLTQMREAMPSTLSFDDFLAACQRPLRRSIRVNTLKTSVADFLQLTAPYGWTLTPIPWCEEGFWIERDNEDALPLGSTAEHLSGLFYIQEASSMLPVAALFADGNAPQRVMDVAAAPGSKTTQIAARMNNEGAILANEFSASRVKVLHANISRCGISNVALTHFDGRVFGAAVPEMFDAILLDAPCSGEGVVRKDPDALKNWSPESNQEIAATQRELIDSAFHALRPGGTLVYSTCTLNREENEAVCLWLKETYHDAVEFLPLGDLFPGANKALTEDGFLHVFPQIYDCEGFFVARLRKTQAIPVLPAPKYKVGNFPFSPVKDREAGQIRQAAASVGLNWDENLRLWQRDKELWLFPVGIEALIGKVRFSRLGIKLAETHNKGYRWQHEAVIALASPDNVNAFELTPQEAEEWYRGRDVYPQAAPVADDVLVTFQHQPIGLAKRIGSRLKNSYPRELVRDGKLFTGNA</sequence>
<name>RSMF_ECOL6</name>
<evidence type="ECO:0000255" key="1">
    <source>
        <dbReference type="HAMAP-Rule" id="MF_01579"/>
    </source>
</evidence>
<evidence type="ECO:0000305" key="2"/>
<comment type="function">
    <text evidence="1">Specifically methylates the cytosine at position 1407 (m5C1407) of 16S rRNA.</text>
</comment>
<comment type="catalytic activity">
    <reaction evidence="1">
        <text>cytidine(1407) in 16S rRNA + S-adenosyl-L-methionine = 5-methylcytidine(1407) in 16S rRNA + S-adenosyl-L-homocysteine + H(+)</text>
        <dbReference type="Rhea" id="RHEA:42756"/>
        <dbReference type="Rhea" id="RHEA-COMP:10223"/>
        <dbReference type="Rhea" id="RHEA-COMP:10224"/>
        <dbReference type="ChEBI" id="CHEBI:15378"/>
        <dbReference type="ChEBI" id="CHEBI:57856"/>
        <dbReference type="ChEBI" id="CHEBI:59789"/>
        <dbReference type="ChEBI" id="CHEBI:74483"/>
        <dbReference type="ChEBI" id="CHEBI:82748"/>
        <dbReference type="EC" id="2.1.1.178"/>
    </reaction>
</comment>
<comment type="subcellular location">
    <subcellularLocation>
        <location evidence="1">Cytoplasm</location>
    </subcellularLocation>
</comment>
<comment type="similarity">
    <text evidence="1">Belongs to the class I-like SAM-binding methyltransferase superfamily. RsmB/NOP family.</text>
</comment>
<comment type="sequence caution" evidence="2">
    <conflict type="erroneous initiation">
        <sequence resource="EMBL-CDS" id="AAN80703"/>
    </conflict>
</comment>
<dbReference type="EC" id="2.1.1.178" evidence="1"/>
<dbReference type="EMBL" id="AE014075">
    <property type="protein sequence ID" value="AAN80703.1"/>
    <property type="status" value="ALT_INIT"/>
    <property type="molecule type" value="Genomic_DNA"/>
</dbReference>
<dbReference type="RefSeq" id="WP_001704100.1">
    <property type="nucleotide sequence ID" value="NZ_CP051263.1"/>
</dbReference>
<dbReference type="SMR" id="Q8FGS9"/>
<dbReference type="STRING" id="199310.c2244"/>
<dbReference type="KEGG" id="ecc:c2244"/>
<dbReference type="eggNOG" id="COG0144">
    <property type="taxonomic scope" value="Bacteria"/>
</dbReference>
<dbReference type="eggNOG" id="COG3270">
    <property type="taxonomic scope" value="Bacteria"/>
</dbReference>
<dbReference type="HOGENOM" id="CLU_005316_6_2_6"/>
<dbReference type="Proteomes" id="UP000001410">
    <property type="component" value="Chromosome"/>
</dbReference>
<dbReference type="GO" id="GO:0005737">
    <property type="term" value="C:cytoplasm"/>
    <property type="evidence" value="ECO:0007669"/>
    <property type="project" value="UniProtKB-SubCell"/>
</dbReference>
<dbReference type="GO" id="GO:0003723">
    <property type="term" value="F:RNA binding"/>
    <property type="evidence" value="ECO:0007669"/>
    <property type="project" value="UniProtKB-KW"/>
</dbReference>
<dbReference type="GO" id="GO:0009383">
    <property type="term" value="F:rRNA (cytosine-C5-)-methyltransferase activity"/>
    <property type="evidence" value="ECO:0007669"/>
    <property type="project" value="TreeGrafter"/>
</dbReference>
<dbReference type="GO" id="GO:0070475">
    <property type="term" value="P:rRNA base methylation"/>
    <property type="evidence" value="ECO:0007669"/>
    <property type="project" value="TreeGrafter"/>
</dbReference>
<dbReference type="CDD" id="cd02440">
    <property type="entry name" value="AdoMet_MTases"/>
    <property type="match status" value="1"/>
</dbReference>
<dbReference type="FunFam" id="3.10.450.720:FF:000001">
    <property type="entry name" value="Ribosomal RNA small subunit methyltransferase F"/>
    <property type="match status" value="1"/>
</dbReference>
<dbReference type="FunFam" id="3.40.50.150:FF:000079">
    <property type="entry name" value="Ribosomal RNA small subunit methyltransferase F"/>
    <property type="match status" value="1"/>
</dbReference>
<dbReference type="Gene3D" id="3.10.450.720">
    <property type="match status" value="1"/>
</dbReference>
<dbReference type="Gene3D" id="3.40.50.150">
    <property type="entry name" value="Vaccinia Virus protein VP39"/>
    <property type="match status" value="1"/>
</dbReference>
<dbReference type="HAMAP" id="MF_01579">
    <property type="entry name" value="16SrRNA_methyltr_F"/>
    <property type="match status" value="1"/>
</dbReference>
<dbReference type="InterPro" id="IPR031341">
    <property type="entry name" value="Methyltr_RsmF_N"/>
</dbReference>
<dbReference type="InterPro" id="IPR049560">
    <property type="entry name" value="MeTrfase_RsmB-F_NOP2_cat"/>
</dbReference>
<dbReference type="InterPro" id="IPR001678">
    <property type="entry name" value="MeTrfase_RsmB-F_NOP2_dom"/>
</dbReference>
<dbReference type="InterPro" id="IPR027391">
    <property type="entry name" value="Nol1_Nop2_Fmu_2"/>
</dbReference>
<dbReference type="InterPro" id="IPR011023">
    <property type="entry name" value="Nop2p"/>
</dbReference>
<dbReference type="InterPro" id="IPR023267">
    <property type="entry name" value="RCMT"/>
</dbReference>
<dbReference type="InterPro" id="IPR023545">
    <property type="entry name" value="rRNA_ssu_MeTfrase_F"/>
</dbReference>
<dbReference type="InterPro" id="IPR018314">
    <property type="entry name" value="RsmB/NOL1/NOP2-like_CS"/>
</dbReference>
<dbReference type="InterPro" id="IPR029063">
    <property type="entry name" value="SAM-dependent_MTases_sf"/>
</dbReference>
<dbReference type="InterPro" id="IPR048457">
    <property type="entry name" value="YebU_pre-PUA_dom"/>
</dbReference>
<dbReference type="NCBIfam" id="TIGR00446">
    <property type="entry name" value="nop2p"/>
    <property type="match status" value="1"/>
</dbReference>
<dbReference type="NCBIfam" id="NF008898">
    <property type="entry name" value="PRK11933.1"/>
    <property type="match status" value="1"/>
</dbReference>
<dbReference type="PANTHER" id="PTHR22807:SF30">
    <property type="entry name" value="28S RRNA (CYTOSINE(4447)-C(5))-METHYLTRANSFERASE-RELATED"/>
    <property type="match status" value="1"/>
</dbReference>
<dbReference type="PANTHER" id="PTHR22807">
    <property type="entry name" value="NOP2 YEAST -RELATED NOL1/NOP2/FMU SUN DOMAIN-CONTAINING"/>
    <property type="match status" value="1"/>
</dbReference>
<dbReference type="Pfam" id="PF01189">
    <property type="entry name" value="Methyltr_RsmB-F"/>
    <property type="match status" value="1"/>
</dbReference>
<dbReference type="Pfam" id="PF17125">
    <property type="entry name" value="Methyltr_RsmF_N"/>
    <property type="match status" value="1"/>
</dbReference>
<dbReference type="Pfam" id="PF13636">
    <property type="entry name" value="Methyltranf_PUA"/>
    <property type="match status" value="1"/>
</dbReference>
<dbReference type="Pfam" id="PF21150">
    <property type="entry name" value="YebU_pre-PUA_dom"/>
    <property type="match status" value="1"/>
</dbReference>
<dbReference type="PRINTS" id="PR02008">
    <property type="entry name" value="RCMTFAMILY"/>
</dbReference>
<dbReference type="SUPFAM" id="SSF53335">
    <property type="entry name" value="S-adenosyl-L-methionine-dependent methyltransferases"/>
    <property type="match status" value="1"/>
</dbReference>
<dbReference type="PROSITE" id="PS01153">
    <property type="entry name" value="NOL1_NOP2_SUN"/>
    <property type="match status" value="1"/>
</dbReference>
<dbReference type="PROSITE" id="PS51686">
    <property type="entry name" value="SAM_MT_RSMB_NOP"/>
    <property type="match status" value="1"/>
</dbReference>
<organism>
    <name type="scientific">Escherichia coli O6:H1 (strain CFT073 / ATCC 700928 / UPEC)</name>
    <dbReference type="NCBI Taxonomy" id="199310"/>
    <lineage>
        <taxon>Bacteria</taxon>
        <taxon>Pseudomonadati</taxon>
        <taxon>Pseudomonadota</taxon>
        <taxon>Gammaproteobacteria</taxon>
        <taxon>Enterobacterales</taxon>
        <taxon>Enterobacteriaceae</taxon>
        <taxon>Escherichia</taxon>
    </lineage>
</organism>
<keyword id="KW-0963">Cytoplasm</keyword>
<keyword id="KW-0489">Methyltransferase</keyword>
<keyword id="KW-1185">Reference proteome</keyword>
<keyword id="KW-0694">RNA-binding</keyword>
<keyword id="KW-0698">rRNA processing</keyword>
<keyword id="KW-0949">S-adenosyl-L-methionine</keyword>
<keyword id="KW-0808">Transferase</keyword>